<name>BRK1_PHYSG</name>
<organism>
    <name type="scientific">Physalaemus signifer</name>
    <name type="common">Girard's dwarf frog</name>
    <dbReference type="NCBI Taxonomy" id="364768"/>
    <lineage>
        <taxon>Eukaryota</taxon>
        <taxon>Metazoa</taxon>
        <taxon>Chordata</taxon>
        <taxon>Craniata</taxon>
        <taxon>Vertebrata</taxon>
        <taxon>Euteleostomi</taxon>
        <taxon>Amphibia</taxon>
        <taxon>Batrachia</taxon>
        <taxon>Anura</taxon>
        <taxon>Neobatrachia</taxon>
        <taxon>Hyloidea</taxon>
        <taxon>Leptodactylidae</taxon>
        <taxon>Leiuperinae</taxon>
        <taxon>Physalaemus</taxon>
    </lineage>
</organism>
<sequence length="8" mass="833">APPGFTPF</sequence>
<accession>P86811</accession>
<protein>
    <recommendedName>
        <fullName>Des-Arg9-[Ala1,Thr6]-bradykinin</fullName>
        <shortName evidence="3">Des-Arg-[Ala1,Thr6]-bradykinin</shortName>
    </recommendedName>
</protein>
<keyword id="KW-0878">Amphibian defense peptide</keyword>
<keyword id="KW-0903">Direct protein sequencing</keyword>
<keyword id="KW-1213">G-protein coupled receptor impairing toxin</keyword>
<keyword id="KW-0964">Secreted</keyword>
<keyword id="KW-0800">Toxin</keyword>
<keyword id="KW-0838">Vasoactive</keyword>
<keyword id="KW-0840">Vasodilator</keyword>
<dbReference type="GO" id="GO:0005576">
    <property type="term" value="C:extracellular region"/>
    <property type="evidence" value="ECO:0007669"/>
    <property type="project" value="UniProtKB-SubCell"/>
</dbReference>
<dbReference type="GO" id="GO:0090729">
    <property type="term" value="F:toxin activity"/>
    <property type="evidence" value="ECO:0007669"/>
    <property type="project" value="UniProtKB-KW"/>
</dbReference>
<dbReference type="GO" id="GO:0006952">
    <property type="term" value="P:defense response"/>
    <property type="evidence" value="ECO:0007669"/>
    <property type="project" value="UniProtKB-KW"/>
</dbReference>
<dbReference type="GO" id="GO:0042311">
    <property type="term" value="P:vasodilation"/>
    <property type="evidence" value="ECO:0007669"/>
    <property type="project" value="UniProtKB-KW"/>
</dbReference>
<evidence type="ECO:0000250" key="1"/>
<evidence type="ECO:0000269" key="2">
    <source ref="1"/>
</evidence>
<evidence type="ECO:0000303" key="3">
    <source ref="1"/>
</evidence>
<evidence type="ECO:0000305" key="4"/>
<comment type="function">
    <text evidence="1">Produces in vitro relaxation of rat arterial smooth muscle and constriction of intestinal smooth muscle (By similarity). May target bradykinin receptors (BDKRB).</text>
</comment>
<comment type="subcellular location">
    <subcellularLocation>
        <location evidence="2">Secreted</location>
    </subcellularLocation>
</comment>
<comment type="tissue specificity">
    <text evidence="2">Expressed by the skin glands.</text>
</comment>
<comment type="similarity">
    <text evidence="4">Belongs to the bradykinin-related peptide family.</text>
</comment>
<reference evidence="4" key="1">
    <citation type="submission" date="2010-09" db="UniProtKB">
        <title>Bradykinin-related peptides in skin secretion of Physalaemus signifer (Girard, 1853) (Anura, Leiuperidae).</title>
        <authorList>
            <person name="Rates B."/>
            <person name="Ireno I.C."/>
            <person name="Canelas M.A."/>
            <person name="de Lima M.E."/>
            <person name="Pimenta A.M.C."/>
        </authorList>
    </citation>
    <scope>PROTEIN SEQUENCE</scope>
    <scope>SUBCELLULAR LOCATION</scope>
    <scope>TISSUE SPECIFICITY</scope>
    <source>
        <tissue evidence="2">Skin secretion</tissue>
    </source>
</reference>
<feature type="peptide" id="PRO_0000404686" description="Des-Arg9-[Ala1,Thr6]-bradykinin" evidence="2">
    <location>
        <begin position="1"/>
        <end position="8"/>
    </location>
</feature>
<proteinExistence type="evidence at protein level"/>